<proteinExistence type="evidence at transcript level"/>
<sequence>MVDREQLVQKARLAEQAERYDDMAAAMKSVTELNEALSNEERNLLSVAYKNVVGARRSSWRVISSIEQKTSADGNEKKIEMVRAYREKIEKELETVCQDVLNLLDNFLIKNCGETQHESKVFYLKMKGDYYRYLAEVATGEKRAAVVESSEKSYSEAHEISKEHMQPTHPIRLGLALNYSVFYYEIQNAPEQACHLAKTAFDDAIAELDTLNEDSYKDSTLIMQLLRDNLTLWTSDQQDDEGGEGNN</sequence>
<organism>
    <name type="scientific">Danio rerio</name>
    <name type="common">Zebrafish</name>
    <name type="synonym">Brachydanio rerio</name>
    <dbReference type="NCBI Taxonomy" id="7955"/>
    <lineage>
        <taxon>Eukaryota</taxon>
        <taxon>Metazoa</taxon>
        <taxon>Chordata</taxon>
        <taxon>Craniata</taxon>
        <taxon>Vertebrata</taxon>
        <taxon>Euteleostomi</taxon>
        <taxon>Actinopterygii</taxon>
        <taxon>Neopterygii</taxon>
        <taxon>Teleostei</taxon>
        <taxon>Ostariophysi</taxon>
        <taxon>Cypriniformes</taxon>
        <taxon>Danionidae</taxon>
        <taxon>Danioninae</taxon>
        <taxon>Danio</taxon>
    </lineage>
</organism>
<evidence type="ECO:0000250" key="1">
    <source>
        <dbReference type="UniProtKB" id="P61981"/>
    </source>
</evidence>
<evidence type="ECO:0000250" key="2">
    <source>
        <dbReference type="UniProtKB" id="P68252"/>
    </source>
</evidence>
<evidence type="ECO:0000305" key="3"/>
<dbReference type="EMBL" id="BC059494">
    <property type="protein sequence ID" value="AAH59494.1"/>
    <property type="molecule type" value="mRNA"/>
</dbReference>
<dbReference type="RefSeq" id="NP_998187.1">
    <property type="nucleotide sequence ID" value="NM_213022.2"/>
</dbReference>
<dbReference type="SMR" id="Q6PC29"/>
<dbReference type="FunCoup" id="Q6PC29">
    <property type="interactions" value="1229"/>
</dbReference>
<dbReference type="STRING" id="7955.ENSDARP00000074935"/>
<dbReference type="PaxDb" id="7955-ENSDARP00000074935"/>
<dbReference type="Ensembl" id="ENSDART00000080486">
    <property type="protein sequence ID" value="ENSDARP00000074935"/>
    <property type="gene ID" value="ENSDARG00000067626"/>
</dbReference>
<dbReference type="GeneID" id="117604"/>
<dbReference type="KEGG" id="dre:117604"/>
<dbReference type="AGR" id="ZFIN:ZDB-GENE-011115-1"/>
<dbReference type="CTD" id="117604"/>
<dbReference type="ZFIN" id="ZDB-GENE-011115-1">
    <property type="gene designation" value="ywhag1"/>
</dbReference>
<dbReference type="eggNOG" id="KOG0841">
    <property type="taxonomic scope" value="Eukaryota"/>
</dbReference>
<dbReference type="HOGENOM" id="CLU_058290_0_0_1"/>
<dbReference type="InParanoid" id="Q6PC29"/>
<dbReference type="OMA" id="DSTQCES"/>
<dbReference type="OrthoDB" id="10260625at2759"/>
<dbReference type="PhylomeDB" id="Q6PC29"/>
<dbReference type="TreeFam" id="TF102003"/>
<dbReference type="ChiTaRS" id="ywhag1">
    <property type="organism name" value="zebrafish"/>
</dbReference>
<dbReference type="PRO" id="PR:Q6PC29"/>
<dbReference type="Proteomes" id="UP000000437">
    <property type="component" value="Chromosome 5"/>
</dbReference>
<dbReference type="Bgee" id="ENSDARG00000067626">
    <property type="expression patterns" value="Expressed in brain and 50 other cell types or tissues"/>
</dbReference>
<dbReference type="ExpressionAtlas" id="Q6PC29">
    <property type="expression patterns" value="baseline and differential"/>
</dbReference>
<dbReference type="GO" id="GO:0005737">
    <property type="term" value="C:cytoplasm"/>
    <property type="evidence" value="ECO:0000318"/>
    <property type="project" value="GO_Central"/>
</dbReference>
<dbReference type="GO" id="GO:0140031">
    <property type="term" value="F:phosphorylation-dependent protein binding"/>
    <property type="evidence" value="ECO:0000250"/>
    <property type="project" value="UniProtKB"/>
</dbReference>
<dbReference type="GO" id="GO:0005080">
    <property type="term" value="F:protein kinase C binding"/>
    <property type="evidence" value="ECO:0000318"/>
    <property type="project" value="GO_Central"/>
</dbReference>
<dbReference type="GO" id="GO:0140311">
    <property type="term" value="F:protein sequestering activity"/>
    <property type="evidence" value="ECO:0000250"/>
    <property type="project" value="UniProtKB"/>
</dbReference>
<dbReference type="GO" id="GO:0007420">
    <property type="term" value="P:brain development"/>
    <property type="evidence" value="ECO:0000315"/>
    <property type="project" value="ZFIN"/>
</dbReference>
<dbReference type="GO" id="GO:0007507">
    <property type="term" value="P:heart development"/>
    <property type="evidence" value="ECO:0000315"/>
    <property type="project" value="ZFIN"/>
</dbReference>
<dbReference type="GO" id="GO:0008104">
    <property type="term" value="P:protein localization"/>
    <property type="evidence" value="ECO:0000318"/>
    <property type="project" value="GO_Central"/>
</dbReference>
<dbReference type="GO" id="GO:0007165">
    <property type="term" value="P:signal transduction"/>
    <property type="evidence" value="ECO:0000318"/>
    <property type="project" value="GO_Central"/>
</dbReference>
<dbReference type="FunFam" id="1.20.190.20:FF:000001">
    <property type="entry name" value="14-3-3 gamma 1"/>
    <property type="match status" value="1"/>
</dbReference>
<dbReference type="Gene3D" id="1.20.190.20">
    <property type="entry name" value="14-3-3 domain"/>
    <property type="match status" value="1"/>
</dbReference>
<dbReference type="InterPro" id="IPR000308">
    <property type="entry name" value="14-3-3"/>
</dbReference>
<dbReference type="InterPro" id="IPR023409">
    <property type="entry name" value="14-3-3_CS"/>
</dbReference>
<dbReference type="InterPro" id="IPR036815">
    <property type="entry name" value="14-3-3_dom_sf"/>
</dbReference>
<dbReference type="InterPro" id="IPR023410">
    <property type="entry name" value="14-3-3_domain"/>
</dbReference>
<dbReference type="PANTHER" id="PTHR18860">
    <property type="entry name" value="14-3-3 PROTEIN"/>
    <property type="match status" value="1"/>
</dbReference>
<dbReference type="Pfam" id="PF00244">
    <property type="entry name" value="14-3-3"/>
    <property type="match status" value="1"/>
</dbReference>
<dbReference type="PIRSF" id="PIRSF000868">
    <property type="entry name" value="14-3-3"/>
    <property type="match status" value="1"/>
</dbReference>
<dbReference type="PRINTS" id="PR00305">
    <property type="entry name" value="1433ZETA"/>
</dbReference>
<dbReference type="SMART" id="SM00101">
    <property type="entry name" value="14_3_3"/>
    <property type="match status" value="1"/>
</dbReference>
<dbReference type="SUPFAM" id="SSF48445">
    <property type="entry name" value="14-3-3 protein"/>
    <property type="match status" value="1"/>
</dbReference>
<dbReference type="PROSITE" id="PS00796">
    <property type="entry name" value="1433_1"/>
    <property type="match status" value="1"/>
</dbReference>
<dbReference type="PROSITE" id="PS00797">
    <property type="entry name" value="1433_2"/>
    <property type="match status" value="1"/>
</dbReference>
<gene>
    <name type="primary">ywhag1</name>
    <name type="synonym">ywhag</name>
    <name type="ORF">zgc:73131</name>
</gene>
<protein>
    <recommendedName>
        <fullName>14-3-3 protein gamma-1</fullName>
    </recommendedName>
</protein>
<keyword id="KW-0963">Cytoplasm</keyword>
<keyword id="KW-1185">Reference proteome</keyword>
<feature type="chain" id="PRO_0000058614" description="14-3-3 protein gamma-1">
    <location>
        <begin position="1"/>
        <end position="247"/>
    </location>
</feature>
<feature type="site" description="Interaction with phosphoserine on interacting protein" evidence="1">
    <location>
        <position position="57"/>
    </location>
</feature>
<feature type="site" description="Interaction with phosphoserine on interacting protein" evidence="1">
    <location>
        <position position="132"/>
    </location>
</feature>
<reference key="1">
    <citation type="submission" date="2003-10" db="EMBL/GenBank/DDBJ databases">
        <authorList>
            <consortium name="NIH - Zebrafish Gene Collection (ZGC) project"/>
        </authorList>
    </citation>
    <scope>NUCLEOTIDE SEQUENCE [LARGE SCALE MRNA]</scope>
    <source>
        <tissue>Retina</tissue>
    </source>
</reference>
<comment type="function">
    <text evidence="1">Adapter protein implicated in the regulation of a large spectrum of both general and specialized signaling pathways. Binds to a large number of partners, usually by recognition of a phosphoserine or phosphothreonine motif. Binding generally results in the modulation of the activity of the binding partner.</text>
</comment>
<comment type="subunit">
    <text evidence="1">Homodimer, and heterodimer with other family members.</text>
</comment>
<comment type="subcellular location">
    <subcellularLocation>
        <location evidence="2">Cytoplasm</location>
    </subcellularLocation>
</comment>
<comment type="similarity">
    <text evidence="3">Belongs to the 14-3-3 family.</text>
</comment>
<name>143G1_DANRE</name>
<accession>Q6PC29</accession>